<sequence length="347" mass="39589">MEIDMADKTNKFKTDIERKQFESLPWVEKYRPKNLDDLIAHEDITQTITKLIDNNTLPHLLFYGPPGTGKTSTIQAIARKLYGDNYSRMVLELNASDDRGIDVVREQIKTFASSMFFFNTTVPYKLIILDEADSMTNIAQTALRRVIEKYTKTTRFCIVCNYVIKIIPALQSRCTRFRFSPLPTPPTEIRLKEIIEKENVKVDSKAMNAVLELGCGDMRKCLNILQSVSMSSIDNNITEEAIYKCTGYPMPSDIELMVDWLLNSDYEEAFQNISDLKKKKGLSLNDIIATLQKFVVQIDLDNVILCKLLSHLSDIEYNLSIGSSEKLQLGSLVGCFQLSRDDELLHN</sequence>
<comment type="function">
    <text evidence="1">The elongation of primed DNA templates by DNA polymerase delta and epsilon requires the action of the accessory proteins PCNA and activator 1.</text>
</comment>
<comment type="subunit">
    <text evidence="1">Heteropentamer of various rfc subunits that forms a complex (RFC) with PCNA in the presence of ATP.</text>
</comment>
<comment type="subcellular location">
    <subcellularLocation>
        <location evidence="1">Nucleus</location>
    </subcellularLocation>
</comment>
<comment type="similarity">
    <text evidence="3">Belongs to the activator 1 small subunits family.</text>
</comment>
<keyword id="KW-0067">ATP-binding</keyword>
<keyword id="KW-0235">DNA replication</keyword>
<keyword id="KW-0547">Nucleotide-binding</keyword>
<keyword id="KW-0539">Nucleus</keyword>
<keyword id="KW-1185">Reference proteome</keyword>
<feature type="chain" id="PRO_0000330459" description="Probable replication factor C subunit 5">
    <location>
        <begin position="1"/>
        <end position="347"/>
    </location>
</feature>
<feature type="binding site" evidence="2">
    <location>
        <begin position="64"/>
        <end position="71"/>
    </location>
    <ligand>
        <name>ATP</name>
        <dbReference type="ChEBI" id="CHEBI:30616"/>
    </ligand>
</feature>
<reference key="1">
    <citation type="journal article" date="2005" name="Nature">
        <title>The genome of the social amoeba Dictyostelium discoideum.</title>
        <authorList>
            <person name="Eichinger L."/>
            <person name="Pachebat J.A."/>
            <person name="Gloeckner G."/>
            <person name="Rajandream M.A."/>
            <person name="Sucgang R."/>
            <person name="Berriman M."/>
            <person name="Song J."/>
            <person name="Olsen R."/>
            <person name="Szafranski K."/>
            <person name="Xu Q."/>
            <person name="Tunggal B."/>
            <person name="Kummerfeld S."/>
            <person name="Madera M."/>
            <person name="Konfortov B.A."/>
            <person name="Rivero F."/>
            <person name="Bankier A.T."/>
            <person name="Lehmann R."/>
            <person name="Hamlin N."/>
            <person name="Davies R."/>
            <person name="Gaudet P."/>
            <person name="Fey P."/>
            <person name="Pilcher K."/>
            <person name="Chen G."/>
            <person name="Saunders D."/>
            <person name="Sodergren E.J."/>
            <person name="Davis P."/>
            <person name="Kerhornou A."/>
            <person name="Nie X."/>
            <person name="Hall N."/>
            <person name="Anjard C."/>
            <person name="Hemphill L."/>
            <person name="Bason N."/>
            <person name="Farbrother P."/>
            <person name="Desany B."/>
            <person name="Just E."/>
            <person name="Morio T."/>
            <person name="Rost R."/>
            <person name="Churcher C.M."/>
            <person name="Cooper J."/>
            <person name="Haydock S."/>
            <person name="van Driessche N."/>
            <person name="Cronin A."/>
            <person name="Goodhead I."/>
            <person name="Muzny D.M."/>
            <person name="Mourier T."/>
            <person name="Pain A."/>
            <person name="Lu M."/>
            <person name="Harper D."/>
            <person name="Lindsay R."/>
            <person name="Hauser H."/>
            <person name="James K.D."/>
            <person name="Quiles M."/>
            <person name="Madan Babu M."/>
            <person name="Saito T."/>
            <person name="Buchrieser C."/>
            <person name="Wardroper A."/>
            <person name="Felder M."/>
            <person name="Thangavelu M."/>
            <person name="Johnson D."/>
            <person name="Knights A."/>
            <person name="Loulseged H."/>
            <person name="Mungall K.L."/>
            <person name="Oliver K."/>
            <person name="Price C."/>
            <person name="Quail M.A."/>
            <person name="Urushihara H."/>
            <person name="Hernandez J."/>
            <person name="Rabbinowitsch E."/>
            <person name="Steffen D."/>
            <person name="Sanders M."/>
            <person name="Ma J."/>
            <person name="Kohara Y."/>
            <person name="Sharp S."/>
            <person name="Simmonds M.N."/>
            <person name="Spiegler S."/>
            <person name="Tivey A."/>
            <person name="Sugano S."/>
            <person name="White B."/>
            <person name="Walker D."/>
            <person name="Woodward J.R."/>
            <person name="Winckler T."/>
            <person name="Tanaka Y."/>
            <person name="Shaulsky G."/>
            <person name="Schleicher M."/>
            <person name="Weinstock G.M."/>
            <person name="Rosenthal A."/>
            <person name="Cox E.C."/>
            <person name="Chisholm R.L."/>
            <person name="Gibbs R.A."/>
            <person name="Loomis W.F."/>
            <person name="Platzer M."/>
            <person name="Kay R.R."/>
            <person name="Williams J.G."/>
            <person name="Dear P.H."/>
            <person name="Noegel A.A."/>
            <person name="Barrell B.G."/>
            <person name="Kuspa A."/>
        </authorList>
    </citation>
    <scope>NUCLEOTIDE SEQUENCE [LARGE SCALE GENOMIC DNA]</scope>
    <source>
        <strain>AX4</strain>
    </source>
</reference>
<dbReference type="EMBL" id="AAFI02000046">
    <property type="protein sequence ID" value="EAL66323.1"/>
    <property type="molecule type" value="Genomic_DNA"/>
</dbReference>
<dbReference type="RefSeq" id="XP_640301.1">
    <property type="nucleotide sequence ID" value="XM_635209.1"/>
</dbReference>
<dbReference type="SMR" id="Q54ST4"/>
<dbReference type="FunCoup" id="Q54ST4">
    <property type="interactions" value="508"/>
</dbReference>
<dbReference type="STRING" id="44689.Q54ST4"/>
<dbReference type="GlyGen" id="Q54ST4">
    <property type="glycosylation" value="1 site"/>
</dbReference>
<dbReference type="PaxDb" id="44689-DDB0232229"/>
<dbReference type="EnsemblProtists" id="EAL66323">
    <property type="protein sequence ID" value="EAL66323"/>
    <property type="gene ID" value="DDB_G0282235"/>
</dbReference>
<dbReference type="GeneID" id="8623477"/>
<dbReference type="KEGG" id="ddi:DDB_G0282235"/>
<dbReference type="dictyBase" id="DDB_G0282235">
    <property type="gene designation" value="rfc5"/>
</dbReference>
<dbReference type="VEuPathDB" id="AmoebaDB:DDB_G0282235"/>
<dbReference type="eggNOG" id="KOG0990">
    <property type="taxonomic scope" value="Eukaryota"/>
</dbReference>
<dbReference type="HOGENOM" id="CLU_042324_2_0_1"/>
<dbReference type="InParanoid" id="Q54ST4"/>
<dbReference type="OMA" id="AEDNLPW"/>
<dbReference type="PhylomeDB" id="Q54ST4"/>
<dbReference type="Reactome" id="R-DDI-110314">
    <property type="pathway name" value="Recognition of DNA damage by PCNA-containing replication complex"/>
</dbReference>
<dbReference type="Reactome" id="R-DDI-176187">
    <property type="pathway name" value="Activation of ATR in response to replication stress"/>
</dbReference>
<dbReference type="Reactome" id="R-DDI-5651801">
    <property type="pathway name" value="PCNA-Dependent Long Patch Base Excision Repair"/>
</dbReference>
<dbReference type="Reactome" id="R-DDI-5655862">
    <property type="pathway name" value="Translesion synthesis by POLK"/>
</dbReference>
<dbReference type="Reactome" id="R-DDI-5656169">
    <property type="pathway name" value="Termination of translesion DNA synthesis"/>
</dbReference>
<dbReference type="Reactome" id="R-DDI-5696397">
    <property type="pathway name" value="Gap-filling DNA repair synthesis and ligation in GG-NER"/>
</dbReference>
<dbReference type="Reactome" id="R-DDI-6782135">
    <property type="pathway name" value="Dual incision in TC-NER"/>
</dbReference>
<dbReference type="Reactome" id="R-DDI-6782210">
    <property type="pathway name" value="Gap-filling DNA repair synthesis and ligation in TC-NER"/>
</dbReference>
<dbReference type="Reactome" id="R-DDI-69091">
    <property type="pathway name" value="Polymerase switching"/>
</dbReference>
<dbReference type="PRO" id="PR:Q54ST4"/>
<dbReference type="Proteomes" id="UP000002195">
    <property type="component" value="Chromosome 3"/>
</dbReference>
<dbReference type="GO" id="GO:0005663">
    <property type="term" value="C:DNA replication factor C complex"/>
    <property type="evidence" value="ECO:0000250"/>
    <property type="project" value="dictyBase"/>
</dbReference>
<dbReference type="GO" id="GO:0031391">
    <property type="term" value="C:Elg1 RFC-like complex"/>
    <property type="evidence" value="ECO:0000250"/>
    <property type="project" value="dictyBase"/>
</dbReference>
<dbReference type="GO" id="GO:0005634">
    <property type="term" value="C:nucleus"/>
    <property type="evidence" value="ECO:0000318"/>
    <property type="project" value="GO_Central"/>
</dbReference>
<dbReference type="GO" id="GO:0005524">
    <property type="term" value="F:ATP binding"/>
    <property type="evidence" value="ECO:0007669"/>
    <property type="project" value="UniProtKB-KW"/>
</dbReference>
<dbReference type="GO" id="GO:0016887">
    <property type="term" value="F:ATP hydrolysis activity"/>
    <property type="evidence" value="ECO:0007669"/>
    <property type="project" value="InterPro"/>
</dbReference>
<dbReference type="GO" id="GO:0003677">
    <property type="term" value="F:DNA binding"/>
    <property type="evidence" value="ECO:0007669"/>
    <property type="project" value="InterPro"/>
</dbReference>
<dbReference type="GO" id="GO:0003689">
    <property type="term" value="F:DNA clamp loader activity"/>
    <property type="evidence" value="ECO:0000250"/>
    <property type="project" value="dictyBase"/>
</dbReference>
<dbReference type="GO" id="GO:0006281">
    <property type="term" value="P:DNA repair"/>
    <property type="evidence" value="ECO:0000318"/>
    <property type="project" value="GO_Central"/>
</dbReference>
<dbReference type="GO" id="GO:0006261">
    <property type="term" value="P:DNA-templated DNA replication"/>
    <property type="evidence" value="ECO:0000318"/>
    <property type="project" value="GO_Central"/>
</dbReference>
<dbReference type="GO" id="GO:0006272">
    <property type="term" value="P:leading strand elongation"/>
    <property type="evidence" value="ECO:0000250"/>
    <property type="project" value="dictyBase"/>
</dbReference>
<dbReference type="CDD" id="cd00009">
    <property type="entry name" value="AAA"/>
    <property type="match status" value="1"/>
</dbReference>
<dbReference type="CDD" id="cd18140">
    <property type="entry name" value="HLD_clamp_RFC"/>
    <property type="match status" value="1"/>
</dbReference>
<dbReference type="FunFam" id="1.20.272.10:FF:000004">
    <property type="entry name" value="Replication factor C subunit 5"/>
    <property type="match status" value="1"/>
</dbReference>
<dbReference type="FunFam" id="3.40.50.300:FF:000129">
    <property type="entry name" value="Replication factor C subunit 5"/>
    <property type="match status" value="1"/>
</dbReference>
<dbReference type="Gene3D" id="1.10.8.60">
    <property type="match status" value="1"/>
</dbReference>
<dbReference type="Gene3D" id="1.20.272.10">
    <property type="match status" value="1"/>
</dbReference>
<dbReference type="Gene3D" id="3.40.50.300">
    <property type="entry name" value="P-loop containing nucleotide triphosphate hydrolases"/>
    <property type="match status" value="1"/>
</dbReference>
<dbReference type="InterPro" id="IPR003593">
    <property type="entry name" value="AAA+_ATPase"/>
</dbReference>
<dbReference type="InterPro" id="IPR003959">
    <property type="entry name" value="ATPase_AAA_core"/>
</dbReference>
<dbReference type="InterPro" id="IPR008921">
    <property type="entry name" value="DNA_pol3_clamp-load_cplx_C"/>
</dbReference>
<dbReference type="InterPro" id="IPR050238">
    <property type="entry name" value="DNA_Rep/Repair_Clamp_Loader"/>
</dbReference>
<dbReference type="InterPro" id="IPR027417">
    <property type="entry name" value="P-loop_NTPase"/>
</dbReference>
<dbReference type="InterPro" id="IPR013748">
    <property type="entry name" value="Rep_factorC_C"/>
</dbReference>
<dbReference type="InterPro" id="IPR047854">
    <property type="entry name" value="RFC_lid"/>
</dbReference>
<dbReference type="NCBIfam" id="NF001679">
    <property type="entry name" value="PRK00440.1"/>
    <property type="match status" value="1"/>
</dbReference>
<dbReference type="PANTHER" id="PTHR11669">
    <property type="entry name" value="REPLICATION FACTOR C / DNA POLYMERASE III GAMMA-TAU SUBUNIT"/>
    <property type="match status" value="1"/>
</dbReference>
<dbReference type="PANTHER" id="PTHR11669:SF9">
    <property type="entry name" value="REPLICATION FACTOR C SUBUNIT 5"/>
    <property type="match status" value="1"/>
</dbReference>
<dbReference type="Pfam" id="PF00004">
    <property type="entry name" value="AAA"/>
    <property type="match status" value="1"/>
</dbReference>
<dbReference type="Pfam" id="PF08542">
    <property type="entry name" value="Rep_fac_C"/>
    <property type="match status" value="1"/>
</dbReference>
<dbReference type="SMART" id="SM00382">
    <property type="entry name" value="AAA"/>
    <property type="match status" value="1"/>
</dbReference>
<dbReference type="SUPFAM" id="SSF52540">
    <property type="entry name" value="P-loop containing nucleoside triphosphate hydrolases"/>
    <property type="match status" value="1"/>
</dbReference>
<dbReference type="SUPFAM" id="SSF48019">
    <property type="entry name" value="post-AAA+ oligomerization domain-like"/>
    <property type="match status" value="1"/>
</dbReference>
<accession>Q54ST4</accession>
<gene>
    <name type="primary">rfc5</name>
    <name type="ORF">DDB_G0282235</name>
</gene>
<name>RFC5_DICDI</name>
<proteinExistence type="inferred from homology"/>
<evidence type="ECO:0000250" key="1"/>
<evidence type="ECO:0000255" key="2"/>
<evidence type="ECO:0000305" key="3"/>
<organism>
    <name type="scientific">Dictyostelium discoideum</name>
    <name type="common">Social amoeba</name>
    <dbReference type="NCBI Taxonomy" id="44689"/>
    <lineage>
        <taxon>Eukaryota</taxon>
        <taxon>Amoebozoa</taxon>
        <taxon>Evosea</taxon>
        <taxon>Eumycetozoa</taxon>
        <taxon>Dictyostelia</taxon>
        <taxon>Dictyosteliales</taxon>
        <taxon>Dictyosteliaceae</taxon>
        <taxon>Dictyostelium</taxon>
    </lineage>
</organism>
<protein>
    <recommendedName>
        <fullName>Probable replication factor C subunit 5</fullName>
    </recommendedName>
    <alternativeName>
        <fullName>Activator 1 subunit 5</fullName>
    </alternativeName>
</protein>